<name>RR3_HORVU</name>
<comment type="subunit">
    <text evidence="1">Part of the 30S ribosomal subunit.</text>
</comment>
<comment type="subcellular location">
    <subcellularLocation>
        <location>Plastid</location>
        <location>Chloroplast</location>
    </subcellularLocation>
</comment>
<comment type="similarity">
    <text evidence="3">Belongs to the universal ribosomal protein uS3 family.</text>
</comment>
<dbReference type="EMBL" id="EF115541">
    <property type="protein sequence ID" value="ABK79450.1"/>
    <property type="molecule type" value="Genomic_DNA"/>
</dbReference>
<dbReference type="RefSeq" id="YP_010144463.1">
    <property type="nucleotide sequence ID" value="NC_056985.1"/>
</dbReference>
<dbReference type="RefSeq" id="YP_874691.1">
    <property type="nucleotide sequence ID" value="NC_008590.1"/>
</dbReference>
<dbReference type="SMR" id="A1E9M9"/>
<dbReference type="GeneID" id="4525113"/>
<dbReference type="GeneID" id="67140667"/>
<dbReference type="OMA" id="FISEAWM"/>
<dbReference type="GO" id="GO:0009507">
    <property type="term" value="C:chloroplast"/>
    <property type="evidence" value="ECO:0007669"/>
    <property type="project" value="UniProtKB-SubCell"/>
</dbReference>
<dbReference type="GO" id="GO:0022627">
    <property type="term" value="C:cytosolic small ribosomal subunit"/>
    <property type="evidence" value="ECO:0007669"/>
    <property type="project" value="TreeGrafter"/>
</dbReference>
<dbReference type="GO" id="GO:0003723">
    <property type="term" value="F:RNA binding"/>
    <property type="evidence" value="ECO:0007669"/>
    <property type="project" value="InterPro"/>
</dbReference>
<dbReference type="GO" id="GO:0003735">
    <property type="term" value="F:structural constituent of ribosome"/>
    <property type="evidence" value="ECO:0007669"/>
    <property type="project" value="InterPro"/>
</dbReference>
<dbReference type="GO" id="GO:0006412">
    <property type="term" value="P:translation"/>
    <property type="evidence" value="ECO:0007669"/>
    <property type="project" value="UniProtKB-UniRule"/>
</dbReference>
<dbReference type="CDD" id="cd02412">
    <property type="entry name" value="KH-II_30S_S3"/>
    <property type="match status" value="1"/>
</dbReference>
<dbReference type="FunFam" id="3.30.1140.32:FF:000003">
    <property type="entry name" value="30S ribosomal protein S3, chloroplastic"/>
    <property type="match status" value="1"/>
</dbReference>
<dbReference type="FunFam" id="3.30.300.20:FF:000008">
    <property type="entry name" value="30S ribosomal protein S3, chloroplastic"/>
    <property type="match status" value="1"/>
</dbReference>
<dbReference type="Gene3D" id="3.30.300.20">
    <property type="match status" value="1"/>
</dbReference>
<dbReference type="Gene3D" id="3.30.1140.32">
    <property type="entry name" value="Ribosomal protein S3, C-terminal domain"/>
    <property type="match status" value="1"/>
</dbReference>
<dbReference type="HAMAP" id="MF_01309_B">
    <property type="entry name" value="Ribosomal_uS3_B"/>
    <property type="match status" value="1"/>
</dbReference>
<dbReference type="InterPro" id="IPR015946">
    <property type="entry name" value="KH_dom-like_a/b"/>
</dbReference>
<dbReference type="InterPro" id="IPR009019">
    <property type="entry name" value="KH_sf_prok-type"/>
</dbReference>
<dbReference type="InterPro" id="IPR036419">
    <property type="entry name" value="Ribosomal_S3_C_sf"/>
</dbReference>
<dbReference type="InterPro" id="IPR005704">
    <property type="entry name" value="Ribosomal_uS3_bac-typ"/>
</dbReference>
<dbReference type="InterPro" id="IPR001351">
    <property type="entry name" value="Ribosomal_uS3_C"/>
</dbReference>
<dbReference type="InterPro" id="IPR018280">
    <property type="entry name" value="Ribosomal_uS3_CS"/>
</dbReference>
<dbReference type="NCBIfam" id="TIGR01009">
    <property type="entry name" value="rpsC_bact"/>
    <property type="match status" value="1"/>
</dbReference>
<dbReference type="PANTHER" id="PTHR11760">
    <property type="entry name" value="30S/40S RIBOSOMAL PROTEIN S3"/>
    <property type="match status" value="1"/>
</dbReference>
<dbReference type="PANTHER" id="PTHR11760:SF42">
    <property type="entry name" value="SMALL RIBOSOMAL SUBUNIT PROTEIN US3C"/>
    <property type="match status" value="1"/>
</dbReference>
<dbReference type="Pfam" id="PF00189">
    <property type="entry name" value="Ribosomal_S3_C"/>
    <property type="match status" value="1"/>
</dbReference>
<dbReference type="SUPFAM" id="SSF54814">
    <property type="entry name" value="Prokaryotic type KH domain (KH-domain type II)"/>
    <property type="match status" value="1"/>
</dbReference>
<dbReference type="SUPFAM" id="SSF54821">
    <property type="entry name" value="Ribosomal protein S3 C-terminal domain"/>
    <property type="match status" value="1"/>
</dbReference>
<dbReference type="PROSITE" id="PS00548">
    <property type="entry name" value="RIBOSOMAL_S3"/>
    <property type="match status" value="1"/>
</dbReference>
<feature type="chain" id="PRO_0000293945" description="Small ribosomal subunit protein uS3c">
    <location>
        <begin position="1"/>
        <end position="239"/>
    </location>
</feature>
<feature type="domain" description="KH type-2">
    <location>
        <begin position="43"/>
        <end position="139"/>
    </location>
</feature>
<feature type="region of interest" description="Disordered" evidence="2">
    <location>
        <begin position="50"/>
        <end position="74"/>
    </location>
</feature>
<reference key="1">
    <citation type="journal article" date="2007" name="Theor. Appl. Genet.">
        <title>Complete chloroplast genome sequences of Hordeum vulgare, Sorghum bicolor and Agrostis stolonifera, and comparative analyses with other grass genomes.</title>
        <authorList>
            <person name="Saski C."/>
            <person name="Lee S.-B."/>
            <person name="Fjellheim S."/>
            <person name="Guda C."/>
            <person name="Jansen R.K."/>
            <person name="Luo H."/>
            <person name="Tomkins J."/>
            <person name="Rognli O.A."/>
            <person name="Daniell H."/>
            <person name="Clarke J.L."/>
        </authorList>
    </citation>
    <scope>NUCLEOTIDE SEQUENCE [LARGE SCALE GENOMIC DNA]</scope>
    <source>
        <strain>cv. Morex</strain>
    </source>
</reference>
<accession>A1E9M9</accession>
<organism>
    <name type="scientific">Hordeum vulgare</name>
    <name type="common">Barley</name>
    <dbReference type="NCBI Taxonomy" id="4513"/>
    <lineage>
        <taxon>Eukaryota</taxon>
        <taxon>Viridiplantae</taxon>
        <taxon>Streptophyta</taxon>
        <taxon>Embryophyta</taxon>
        <taxon>Tracheophyta</taxon>
        <taxon>Spermatophyta</taxon>
        <taxon>Magnoliopsida</taxon>
        <taxon>Liliopsida</taxon>
        <taxon>Poales</taxon>
        <taxon>Poaceae</taxon>
        <taxon>BOP clade</taxon>
        <taxon>Pooideae</taxon>
        <taxon>Triticodae</taxon>
        <taxon>Triticeae</taxon>
        <taxon>Hordeinae</taxon>
        <taxon>Hordeum</taxon>
    </lineage>
</organism>
<keyword id="KW-0150">Chloroplast</keyword>
<keyword id="KW-0934">Plastid</keyword>
<keyword id="KW-0687">Ribonucleoprotein</keyword>
<keyword id="KW-0689">Ribosomal protein</keyword>
<sequence length="239" mass="27591">MGQKINPLGFRLGTTQKHHSFWFAQPKNYSEGLQEDKKIRDCIKNYIQKNRKKGSNRKIESDSSSEVITHNRKMDSGSSSEVITHIEIQKEIDTIHVIIHIGFPNLLKKKGAIEELEKDLQKEINSVNQRFNISIEKVKEPYRQPNILAEYIAFQLKNRVSFRKAMKKAIELTKKADIRGVKVKIAGRLGGKEIARAESIKRGRLPLQTIRAKIDYCCYPIRTIYGVLGVKIWIFVDEE</sequence>
<geneLocation type="chloroplast"/>
<evidence type="ECO:0000250" key="1"/>
<evidence type="ECO:0000256" key="2">
    <source>
        <dbReference type="SAM" id="MobiDB-lite"/>
    </source>
</evidence>
<evidence type="ECO:0000305" key="3"/>
<proteinExistence type="inferred from homology"/>
<protein>
    <recommendedName>
        <fullName evidence="3">Small ribosomal subunit protein uS3c</fullName>
    </recommendedName>
    <alternativeName>
        <fullName>30S ribosomal protein S3, chloroplastic</fullName>
    </alternativeName>
</protein>
<gene>
    <name type="primary">rps3</name>
</gene>